<gene>
    <name evidence="1" type="primary">dapF</name>
    <name type="ordered locus">ECDH10B_4001</name>
</gene>
<reference key="1">
    <citation type="journal article" date="2008" name="J. Bacteriol.">
        <title>The complete genome sequence of Escherichia coli DH10B: insights into the biology of a laboratory workhorse.</title>
        <authorList>
            <person name="Durfee T."/>
            <person name="Nelson R."/>
            <person name="Baldwin S."/>
            <person name="Plunkett G. III"/>
            <person name="Burland V."/>
            <person name="Mau B."/>
            <person name="Petrosino J.F."/>
            <person name="Qin X."/>
            <person name="Muzny D.M."/>
            <person name="Ayele M."/>
            <person name="Gibbs R.A."/>
            <person name="Csorgo B."/>
            <person name="Posfai G."/>
            <person name="Weinstock G.M."/>
            <person name="Blattner F.R."/>
        </authorList>
    </citation>
    <scope>NUCLEOTIDE SEQUENCE [LARGE SCALE GENOMIC DNA]</scope>
    <source>
        <strain>K12 / DH10B</strain>
    </source>
</reference>
<feature type="chain" id="PRO_1000099234" description="Diaminopimelate epimerase">
    <location>
        <begin position="1"/>
        <end position="274"/>
    </location>
</feature>
<feature type="active site" description="Proton donor" evidence="1">
    <location>
        <position position="73"/>
    </location>
</feature>
<feature type="active site" description="Proton acceptor" evidence="1">
    <location>
        <position position="217"/>
    </location>
</feature>
<feature type="binding site" evidence="1">
    <location>
        <position position="11"/>
    </location>
    <ligand>
        <name>substrate</name>
    </ligand>
</feature>
<feature type="binding site" evidence="1">
    <location>
        <position position="44"/>
    </location>
    <ligand>
        <name>substrate</name>
    </ligand>
</feature>
<feature type="binding site" evidence="1">
    <location>
        <position position="64"/>
    </location>
    <ligand>
        <name>substrate</name>
    </ligand>
</feature>
<feature type="binding site" evidence="1">
    <location>
        <begin position="74"/>
        <end position="75"/>
    </location>
    <ligand>
        <name>substrate</name>
    </ligand>
</feature>
<feature type="binding site" evidence="1">
    <location>
        <position position="157"/>
    </location>
    <ligand>
        <name>substrate</name>
    </ligand>
</feature>
<feature type="binding site" evidence="1">
    <location>
        <position position="190"/>
    </location>
    <ligand>
        <name>substrate</name>
    </ligand>
</feature>
<feature type="binding site" evidence="1">
    <location>
        <begin position="208"/>
        <end position="209"/>
    </location>
    <ligand>
        <name>substrate</name>
    </ligand>
</feature>
<feature type="binding site" evidence="1">
    <location>
        <begin position="218"/>
        <end position="219"/>
    </location>
    <ligand>
        <name>substrate</name>
    </ligand>
</feature>
<feature type="site" description="Could be important to modulate the pK values of the two catalytic cysteine residues" evidence="1">
    <location>
        <position position="159"/>
    </location>
</feature>
<feature type="site" description="Could be important to modulate the pK values of the two catalytic cysteine residues" evidence="1">
    <location>
        <position position="208"/>
    </location>
</feature>
<feature type="site" description="Important for dimerization" evidence="1">
    <location>
        <position position="268"/>
    </location>
</feature>
<comment type="function">
    <text evidence="1">Catalyzes the stereoinversion of LL-2,6-diaminopimelate (L,L-DAP) to meso-diaminopimelate (meso-DAP), a precursor of L-lysine and an essential component of the bacterial peptidoglycan.</text>
</comment>
<comment type="catalytic activity">
    <reaction evidence="1">
        <text>(2S,6S)-2,6-diaminopimelate = meso-2,6-diaminopimelate</text>
        <dbReference type="Rhea" id="RHEA:15393"/>
        <dbReference type="ChEBI" id="CHEBI:57609"/>
        <dbReference type="ChEBI" id="CHEBI:57791"/>
        <dbReference type="EC" id="5.1.1.7"/>
    </reaction>
</comment>
<comment type="pathway">
    <text evidence="1">Amino-acid biosynthesis; L-lysine biosynthesis via DAP pathway; DL-2,6-diaminopimelate from LL-2,6-diaminopimelate: step 1/1.</text>
</comment>
<comment type="subunit">
    <text evidence="1">Homodimer.</text>
</comment>
<comment type="subcellular location">
    <subcellularLocation>
        <location evidence="1">Cytoplasm</location>
    </subcellularLocation>
</comment>
<comment type="similarity">
    <text evidence="1">Belongs to the diaminopimelate epimerase family.</text>
</comment>
<name>DAPF_ECODH</name>
<accession>B1XAH6</accession>
<protein>
    <recommendedName>
        <fullName evidence="1">Diaminopimelate epimerase</fullName>
        <shortName evidence="1">DAP epimerase</shortName>
        <ecNumber evidence="1">5.1.1.7</ecNumber>
    </recommendedName>
    <alternativeName>
        <fullName evidence="1">PLP-independent amino acid racemase</fullName>
    </alternativeName>
</protein>
<keyword id="KW-0028">Amino-acid biosynthesis</keyword>
<keyword id="KW-0963">Cytoplasm</keyword>
<keyword id="KW-0413">Isomerase</keyword>
<keyword id="KW-0457">Lysine biosynthesis</keyword>
<evidence type="ECO:0000255" key="1">
    <source>
        <dbReference type="HAMAP-Rule" id="MF_00197"/>
    </source>
</evidence>
<proteinExistence type="inferred from homology"/>
<dbReference type="EC" id="5.1.1.7" evidence="1"/>
<dbReference type="EMBL" id="CP000948">
    <property type="protein sequence ID" value="ACB04834.1"/>
    <property type="molecule type" value="Genomic_DNA"/>
</dbReference>
<dbReference type="RefSeq" id="WP_001160654.1">
    <property type="nucleotide sequence ID" value="NC_010473.1"/>
</dbReference>
<dbReference type="SMR" id="B1XAH6"/>
<dbReference type="GeneID" id="93778134"/>
<dbReference type="KEGG" id="ecd:ECDH10B_4001"/>
<dbReference type="HOGENOM" id="CLU_053306_1_1_6"/>
<dbReference type="UniPathway" id="UPA00034">
    <property type="reaction ID" value="UER00025"/>
</dbReference>
<dbReference type="GO" id="GO:0005829">
    <property type="term" value="C:cytosol"/>
    <property type="evidence" value="ECO:0007669"/>
    <property type="project" value="TreeGrafter"/>
</dbReference>
<dbReference type="GO" id="GO:0008837">
    <property type="term" value="F:diaminopimelate epimerase activity"/>
    <property type="evidence" value="ECO:0007669"/>
    <property type="project" value="UniProtKB-UniRule"/>
</dbReference>
<dbReference type="GO" id="GO:0009089">
    <property type="term" value="P:lysine biosynthetic process via diaminopimelate"/>
    <property type="evidence" value="ECO:0007669"/>
    <property type="project" value="UniProtKB-UniRule"/>
</dbReference>
<dbReference type="FunFam" id="3.10.310.10:FF:000001">
    <property type="entry name" value="Diaminopimelate epimerase"/>
    <property type="match status" value="1"/>
</dbReference>
<dbReference type="FunFam" id="3.10.310.10:FF:000002">
    <property type="entry name" value="Diaminopimelate epimerase"/>
    <property type="match status" value="1"/>
</dbReference>
<dbReference type="Gene3D" id="3.10.310.10">
    <property type="entry name" value="Diaminopimelate Epimerase, Chain A, domain 1"/>
    <property type="match status" value="2"/>
</dbReference>
<dbReference type="HAMAP" id="MF_00197">
    <property type="entry name" value="DAP_epimerase"/>
    <property type="match status" value="1"/>
</dbReference>
<dbReference type="InterPro" id="IPR018510">
    <property type="entry name" value="DAP_epimerase_AS"/>
</dbReference>
<dbReference type="InterPro" id="IPR001653">
    <property type="entry name" value="DAP_epimerase_DapF"/>
</dbReference>
<dbReference type="NCBIfam" id="TIGR00652">
    <property type="entry name" value="DapF"/>
    <property type="match status" value="1"/>
</dbReference>
<dbReference type="PANTHER" id="PTHR31689:SF0">
    <property type="entry name" value="DIAMINOPIMELATE EPIMERASE"/>
    <property type="match status" value="1"/>
</dbReference>
<dbReference type="PANTHER" id="PTHR31689">
    <property type="entry name" value="DIAMINOPIMELATE EPIMERASE, CHLOROPLASTIC"/>
    <property type="match status" value="1"/>
</dbReference>
<dbReference type="Pfam" id="PF01678">
    <property type="entry name" value="DAP_epimerase"/>
    <property type="match status" value="2"/>
</dbReference>
<dbReference type="SUPFAM" id="SSF54506">
    <property type="entry name" value="Diaminopimelate epimerase-like"/>
    <property type="match status" value="1"/>
</dbReference>
<dbReference type="PROSITE" id="PS01326">
    <property type="entry name" value="DAP_EPIMERASE"/>
    <property type="match status" value="1"/>
</dbReference>
<sequence length="274" mass="30209">MQFSKMHGLGNDFMVVDAVTQNVFFSPELIRRLADRHLGVGFDQLLVVEPPYDPELDFHYRIFNADGSEVAQCGNGARCFARFVRLKGLTNKRDIRVSTANGRMVLTVTDDDLVRVNMGEPNFEPSAVPFRANKAEKTYIMRAAEQTILCGVVSMGNPHCVIQVDDVDTAAVETLGPVLESHERFPERANIGFMQVVKREHIRLRVYERGAGETQACGSGACAAVAVGIQQGLLAEEVRVELPGGRLDIAWKGPGHPLYMTGPAVHVYDGFIHL</sequence>
<organism>
    <name type="scientific">Escherichia coli (strain K12 / DH10B)</name>
    <dbReference type="NCBI Taxonomy" id="316385"/>
    <lineage>
        <taxon>Bacteria</taxon>
        <taxon>Pseudomonadati</taxon>
        <taxon>Pseudomonadota</taxon>
        <taxon>Gammaproteobacteria</taxon>
        <taxon>Enterobacterales</taxon>
        <taxon>Enterobacteriaceae</taxon>
        <taxon>Escherichia</taxon>
    </lineage>
</organism>